<feature type="initiator methionine" description="Removed" evidence="2">
    <location>
        <position position="1"/>
    </location>
</feature>
<feature type="chain" id="PRO_0000384150" description="Aldo-keto reductase family 1 member A1">
    <location>
        <begin position="2"/>
        <end position="325"/>
    </location>
</feature>
<feature type="active site" description="Proton donor" evidence="2">
    <location>
        <position position="50"/>
    </location>
</feature>
<feature type="binding site" evidence="1">
    <location>
        <begin position="11"/>
        <end position="20"/>
    </location>
    <ligand>
        <name>NADP(+)</name>
        <dbReference type="ChEBI" id="CHEBI:58349"/>
    </ligand>
</feature>
<feature type="binding site" evidence="3">
    <location>
        <position position="21"/>
    </location>
    <ligand>
        <name>NADP(+)</name>
        <dbReference type="ChEBI" id="CHEBI:58349"/>
    </ligand>
</feature>
<feature type="binding site" evidence="3">
    <location>
        <position position="22"/>
    </location>
    <ligand>
        <name>NADP(+)</name>
        <dbReference type="ChEBI" id="CHEBI:58349"/>
    </ligand>
</feature>
<feature type="binding site" evidence="3">
    <location>
        <position position="45"/>
    </location>
    <ligand>
        <name>NADP(+)</name>
        <dbReference type="ChEBI" id="CHEBI:58349"/>
    </ligand>
</feature>
<feature type="binding site" evidence="3">
    <location>
        <position position="162"/>
    </location>
    <ligand>
        <name>NADP(+)</name>
        <dbReference type="ChEBI" id="CHEBI:58349"/>
    </ligand>
</feature>
<feature type="binding site" evidence="3">
    <location>
        <position position="163"/>
    </location>
    <ligand>
        <name>NADP(+)</name>
        <dbReference type="ChEBI" id="CHEBI:58349"/>
    </ligand>
</feature>
<feature type="binding site" evidence="3">
    <location>
        <position position="211"/>
    </location>
    <ligand>
        <name>NADP(+)</name>
        <dbReference type="ChEBI" id="CHEBI:58349"/>
    </ligand>
</feature>
<feature type="binding site" evidence="3">
    <location>
        <position position="213"/>
    </location>
    <ligand>
        <name>NADP(+)</name>
        <dbReference type="ChEBI" id="CHEBI:58349"/>
    </ligand>
</feature>
<feature type="binding site" evidence="3">
    <location>
        <position position="215"/>
    </location>
    <ligand>
        <name>NADP(+)</name>
        <dbReference type="ChEBI" id="CHEBI:58349"/>
    </ligand>
</feature>
<feature type="binding site" evidence="3">
    <location>
        <position position="216"/>
    </location>
    <ligand>
        <name>NADP(+)</name>
        <dbReference type="ChEBI" id="CHEBI:58349"/>
    </ligand>
</feature>
<feature type="binding site" evidence="3">
    <location>
        <position position="263"/>
    </location>
    <ligand>
        <name>NADP(+)</name>
        <dbReference type="ChEBI" id="CHEBI:58349"/>
    </ligand>
</feature>
<feature type="binding site" evidence="3">
    <location>
        <position position="264"/>
    </location>
    <ligand>
        <name>NADP(+)</name>
        <dbReference type="ChEBI" id="CHEBI:58349"/>
    </ligand>
</feature>
<feature type="binding site" evidence="3">
    <location>
        <position position="265"/>
    </location>
    <ligand>
        <name>NADP(+)</name>
        <dbReference type="ChEBI" id="CHEBI:58349"/>
    </ligand>
</feature>
<feature type="binding site" evidence="3">
    <location>
        <position position="266"/>
    </location>
    <ligand>
        <name>NADP(+)</name>
        <dbReference type="ChEBI" id="CHEBI:58349"/>
    </ligand>
</feature>
<feature type="binding site" evidence="3">
    <location>
        <position position="269"/>
    </location>
    <ligand>
        <name>NADP(+)</name>
        <dbReference type="ChEBI" id="CHEBI:58349"/>
    </ligand>
</feature>
<feature type="binding site" evidence="3">
    <location>
        <position position="272"/>
    </location>
    <ligand>
        <name>NADP(+)</name>
        <dbReference type="ChEBI" id="CHEBI:58349"/>
    </ligand>
</feature>
<feature type="binding site" evidence="3">
    <location>
        <position position="273"/>
    </location>
    <ligand>
        <name>NADP(+)</name>
        <dbReference type="ChEBI" id="CHEBI:58349"/>
    </ligand>
</feature>
<feature type="site" description="Lowers pKa of active site Tyr" evidence="2">
    <location>
        <position position="80"/>
    </location>
</feature>
<feature type="modified residue" description="N-acetylalanine" evidence="2">
    <location>
        <position position="2"/>
    </location>
</feature>
<feature type="modified residue" description="Phosphoserine" evidence="4">
    <location>
        <position position="4"/>
    </location>
</feature>
<feature type="modified residue" description="Phosphoserine" evidence="2">
    <location>
        <position position="38"/>
    </location>
</feature>
<feature type="modified residue" description="N6-acetyllysine; alternate" evidence="5">
    <location>
        <position position="127"/>
    </location>
</feature>
<feature type="modified residue" description="N6-succinyllysine; alternate" evidence="5">
    <location>
        <position position="127"/>
    </location>
</feature>
<feature type="modified residue" description="N6-succinyllysine" evidence="5">
    <location>
        <position position="145"/>
    </location>
</feature>
<feature type="modified residue" description="Phosphoserine" evidence="2">
    <location>
        <position position="211"/>
    </location>
</feature>
<accession>Q5R5D5</accession>
<dbReference type="EC" id="1.1.1.2" evidence="4"/>
<dbReference type="EC" id="1.1.1.372" evidence="4"/>
<dbReference type="EC" id="1.1.1.54" evidence="4"/>
<dbReference type="EC" id="1.1.1.19" evidence="4"/>
<dbReference type="EC" id="1.1.1.20" evidence="4"/>
<dbReference type="EC" id="1.6.-.-" evidence="2"/>
<dbReference type="EMBL" id="CR860927">
    <property type="protein sequence ID" value="CAH93031.1"/>
    <property type="molecule type" value="mRNA"/>
</dbReference>
<dbReference type="RefSeq" id="NP_001126792.1">
    <property type="nucleotide sequence ID" value="NM_001133320.1"/>
</dbReference>
<dbReference type="SMR" id="Q5R5D5"/>
<dbReference type="FunCoup" id="Q5R5D5">
    <property type="interactions" value="1135"/>
</dbReference>
<dbReference type="STRING" id="9601.ENSPPYP00000001636"/>
<dbReference type="GeneID" id="100173796"/>
<dbReference type="KEGG" id="pon:100173796"/>
<dbReference type="CTD" id="10327"/>
<dbReference type="eggNOG" id="KOG1577">
    <property type="taxonomic scope" value="Eukaryota"/>
</dbReference>
<dbReference type="InParanoid" id="Q5R5D5"/>
<dbReference type="OrthoDB" id="416253at2759"/>
<dbReference type="Proteomes" id="UP000001595">
    <property type="component" value="Unplaced"/>
</dbReference>
<dbReference type="GO" id="GO:0016324">
    <property type="term" value="C:apical plasma membrane"/>
    <property type="evidence" value="ECO:0000250"/>
    <property type="project" value="UniProtKB"/>
</dbReference>
<dbReference type="GO" id="GO:0005829">
    <property type="term" value="C:cytosol"/>
    <property type="evidence" value="ECO:0000250"/>
    <property type="project" value="UniProtKB"/>
</dbReference>
<dbReference type="GO" id="GO:0008106">
    <property type="term" value="F:alcohol dehydrogenase (NADP+) activity"/>
    <property type="evidence" value="ECO:0007669"/>
    <property type="project" value="UniProtKB-EC"/>
</dbReference>
<dbReference type="GO" id="GO:0047655">
    <property type="term" value="F:allyl-alcohol dehydrogenase activity"/>
    <property type="evidence" value="ECO:0007669"/>
    <property type="project" value="UniProtKB-EC"/>
</dbReference>
<dbReference type="GO" id="GO:0047941">
    <property type="term" value="F:glucuronolactone reductase activity"/>
    <property type="evidence" value="ECO:0000250"/>
    <property type="project" value="UniProtKB"/>
</dbReference>
<dbReference type="GO" id="GO:0047956">
    <property type="term" value="F:glycerol dehydrogenase (NADP+) activity"/>
    <property type="evidence" value="ECO:0007669"/>
    <property type="project" value="RHEA"/>
</dbReference>
<dbReference type="GO" id="GO:0047939">
    <property type="term" value="F:L-glucuronate reductase activity"/>
    <property type="evidence" value="ECO:0000250"/>
    <property type="project" value="UniProtKB"/>
</dbReference>
<dbReference type="GO" id="GO:1990002">
    <property type="term" value="F:methylglyoxal reductase (NADPH) (acetol producing) activity"/>
    <property type="evidence" value="ECO:0007669"/>
    <property type="project" value="RHEA"/>
</dbReference>
<dbReference type="GO" id="GO:0160163">
    <property type="term" value="F:S-nitrosoglutathione reductase (NADPH) activity"/>
    <property type="evidence" value="ECO:0007669"/>
    <property type="project" value="RHEA"/>
</dbReference>
<dbReference type="GO" id="GO:0046185">
    <property type="term" value="P:aldehyde catabolic process"/>
    <property type="evidence" value="ECO:0007669"/>
    <property type="project" value="InterPro"/>
</dbReference>
<dbReference type="GO" id="GO:0110095">
    <property type="term" value="P:cellular detoxification of aldehyde"/>
    <property type="evidence" value="ECO:0000250"/>
    <property type="project" value="UniProtKB"/>
</dbReference>
<dbReference type="GO" id="GO:0006629">
    <property type="term" value="P:lipid metabolic process"/>
    <property type="evidence" value="ECO:0007669"/>
    <property type="project" value="UniProtKB-KW"/>
</dbReference>
<dbReference type="CDD" id="cd19106">
    <property type="entry name" value="AKR_AKR1A1-4"/>
    <property type="match status" value="1"/>
</dbReference>
<dbReference type="FunFam" id="3.20.20.100:FF:000006">
    <property type="entry name" value="Aldo-keto reductase family 1 member A1"/>
    <property type="match status" value="1"/>
</dbReference>
<dbReference type="Gene3D" id="3.20.20.100">
    <property type="entry name" value="NADP-dependent oxidoreductase domain"/>
    <property type="match status" value="1"/>
</dbReference>
<dbReference type="InterPro" id="IPR020471">
    <property type="entry name" value="AKR"/>
</dbReference>
<dbReference type="InterPro" id="IPR044481">
    <property type="entry name" value="AKR1A"/>
</dbReference>
<dbReference type="InterPro" id="IPR018170">
    <property type="entry name" value="Aldo/ket_reductase_CS"/>
</dbReference>
<dbReference type="InterPro" id="IPR023210">
    <property type="entry name" value="NADP_OxRdtase_dom"/>
</dbReference>
<dbReference type="InterPro" id="IPR036812">
    <property type="entry name" value="NADP_OxRdtase_dom_sf"/>
</dbReference>
<dbReference type="PANTHER" id="PTHR11732">
    <property type="entry name" value="ALDO/KETO REDUCTASE"/>
    <property type="match status" value="1"/>
</dbReference>
<dbReference type="Pfam" id="PF00248">
    <property type="entry name" value="Aldo_ket_red"/>
    <property type="match status" value="1"/>
</dbReference>
<dbReference type="PIRSF" id="PIRSF000097">
    <property type="entry name" value="AKR"/>
    <property type="match status" value="1"/>
</dbReference>
<dbReference type="PRINTS" id="PR00069">
    <property type="entry name" value="ALDKETRDTASE"/>
</dbReference>
<dbReference type="SUPFAM" id="SSF51430">
    <property type="entry name" value="NAD(P)-linked oxidoreductase"/>
    <property type="match status" value="1"/>
</dbReference>
<dbReference type="PROSITE" id="PS00798">
    <property type="entry name" value="ALDOKETO_REDUCTASE_1"/>
    <property type="match status" value="1"/>
</dbReference>
<dbReference type="PROSITE" id="PS00062">
    <property type="entry name" value="ALDOKETO_REDUCTASE_2"/>
    <property type="match status" value="1"/>
</dbReference>
<dbReference type="PROSITE" id="PS00063">
    <property type="entry name" value="ALDOKETO_REDUCTASE_3"/>
    <property type="match status" value="1"/>
</dbReference>
<keyword id="KW-0007">Acetylation</keyword>
<keyword id="KW-1003">Cell membrane</keyword>
<keyword id="KW-0963">Cytoplasm</keyword>
<keyword id="KW-0443">Lipid metabolism</keyword>
<keyword id="KW-0472">Membrane</keyword>
<keyword id="KW-0521">NADP</keyword>
<keyword id="KW-0560">Oxidoreductase</keyword>
<keyword id="KW-0597">Phosphoprotein</keyword>
<keyword id="KW-1185">Reference proteome</keyword>
<proteinExistence type="evidence at transcript level"/>
<gene>
    <name type="primary">AKR1A1</name>
</gene>
<comment type="function">
    <text evidence="2 3 4">Catalyzes the NADPH-dependent reduction of a wide variety of carbonyl-containing compounds to their corresponding alcohols. Displays enzymatic activity towards endogenous metabolites such as aromatic and aliphatic aldehydes, ketones, monosaccharides and bile acids, with a preference for negatively charged substrates, such as glucuronate and succinic semialdehyde (By similarity). Functions as a detoxifiying enzyme by reducing a range of toxic aldehydes. Reduces methylglyoxal and 3-deoxyglucosone, which are present at elevated levels under hyperglycemic conditions and are cytotoxic. Involved also in the detoxification of lipid-derived aldehydes like acrolein (By similarity). Plays a role in the activation of procarcinogens, such as polycyclic aromatic hydrocarbon trans-dihydrodiols, and in the metabolism of various xenobiotics and drugs (By similarity). Also acts as an inhibitor of protein S-nitrosylation by mediating degradation of S-nitroso-coenzyme A (S-nitroso-CoA), a cofactor required to S-nitrosylate proteins (By similarity). S-nitroso-CoA reductase activity is involved in reprogramming intermediary metabolism in renal proximal tubules, notably by inhibiting protein S-nitrosylation of isoform 2 of PKM (PKM2) (By similarity). Also acts as a S-nitroso-glutathione reductase by catalyzing the NADPH-dependent reduction of S-nitrosoglutathione (By similarity). Displays no reductase activity towards retinoids (By similarity).</text>
</comment>
<comment type="catalytic activity">
    <reaction evidence="4">
        <text>a primary alcohol + NADP(+) = an aldehyde + NADPH + H(+)</text>
        <dbReference type="Rhea" id="RHEA:15937"/>
        <dbReference type="ChEBI" id="CHEBI:15378"/>
        <dbReference type="ChEBI" id="CHEBI:15734"/>
        <dbReference type="ChEBI" id="CHEBI:17478"/>
        <dbReference type="ChEBI" id="CHEBI:57783"/>
        <dbReference type="ChEBI" id="CHEBI:58349"/>
        <dbReference type="EC" id="1.1.1.2"/>
    </reaction>
</comment>
<comment type="catalytic activity">
    <reaction evidence="4">
        <text>L-gulonate + NADP(+) = aldehydo-D-glucuronate + NADPH + H(+)</text>
        <dbReference type="Rhea" id="RHEA:14909"/>
        <dbReference type="ChEBI" id="CHEBI:13115"/>
        <dbReference type="ChEBI" id="CHEBI:15378"/>
        <dbReference type="ChEBI" id="CHEBI:57783"/>
        <dbReference type="ChEBI" id="CHEBI:58349"/>
        <dbReference type="ChEBI" id="CHEBI:142686"/>
        <dbReference type="EC" id="1.1.1.19"/>
    </reaction>
</comment>
<comment type="catalytic activity">
    <reaction evidence="4">
        <text>L-gulono-1,4-lactone + NADP(+) = D-glucurono-3,6-lactone + NADPH + H(+)</text>
        <dbReference type="Rhea" id="RHEA:18925"/>
        <dbReference type="ChEBI" id="CHEBI:15378"/>
        <dbReference type="ChEBI" id="CHEBI:17587"/>
        <dbReference type="ChEBI" id="CHEBI:18268"/>
        <dbReference type="ChEBI" id="CHEBI:57783"/>
        <dbReference type="ChEBI" id="CHEBI:58349"/>
        <dbReference type="EC" id="1.1.1.20"/>
    </reaction>
</comment>
<comment type="catalytic activity">
    <reaction evidence="4">
        <text>allyl alcohol + NADP(+) = acrolein + NADPH + H(+)</text>
        <dbReference type="Rhea" id="RHEA:12168"/>
        <dbReference type="ChEBI" id="CHEBI:15368"/>
        <dbReference type="ChEBI" id="CHEBI:15378"/>
        <dbReference type="ChEBI" id="CHEBI:16605"/>
        <dbReference type="ChEBI" id="CHEBI:57783"/>
        <dbReference type="ChEBI" id="CHEBI:58349"/>
        <dbReference type="EC" id="1.1.1.54"/>
    </reaction>
</comment>
<comment type="catalytic activity">
    <reaction evidence="4">
        <text>glycerol + NADP(+) = D-glyceraldehyde + NADPH + H(+)</text>
        <dbReference type="Rhea" id="RHEA:23592"/>
        <dbReference type="ChEBI" id="CHEBI:15378"/>
        <dbReference type="ChEBI" id="CHEBI:17378"/>
        <dbReference type="ChEBI" id="CHEBI:17754"/>
        <dbReference type="ChEBI" id="CHEBI:57783"/>
        <dbReference type="ChEBI" id="CHEBI:58349"/>
        <dbReference type="EC" id="1.1.1.372"/>
    </reaction>
</comment>
<comment type="catalytic activity">
    <reaction evidence="4">
        <text>glycerol + NADP(+) = L-glyceraldehyde + NADPH + H(+)</text>
        <dbReference type="Rhea" id="RHEA:38111"/>
        <dbReference type="ChEBI" id="CHEBI:15378"/>
        <dbReference type="ChEBI" id="CHEBI:17754"/>
        <dbReference type="ChEBI" id="CHEBI:27975"/>
        <dbReference type="ChEBI" id="CHEBI:57783"/>
        <dbReference type="ChEBI" id="CHEBI:58349"/>
        <dbReference type="EC" id="1.1.1.372"/>
    </reaction>
</comment>
<comment type="catalytic activity">
    <reaction evidence="4">
        <text>hydroxyacetone + NADP(+) = methylglyoxal + NADPH + H(+)</text>
        <dbReference type="Rhea" id="RHEA:27986"/>
        <dbReference type="ChEBI" id="CHEBI:15378"/>
        <dbReference type="ChEBI" id="CHEBI:17158"/>
        <dbReference type="ChEBI" id="CHEBI:27957"/>
        <dbReference type="ChEBI" id="CHEBI:57783"/>
        <dbReference type="ChEBI" id="CHEBI:58349"/>
    </reaction>
</comment>
<comment type="catalytic activity">
    <reaction evidence="4">
        <text>3-deoxyfructose + NADP(+) = 3-deoxyglucosone + NADPH + H(+)</text>
        <dbReference type="Rhea" id="RHEA:58668"/>
        <dbReference type="ChEBI" id="CHEBI:15378"/>
        <dbReference type="ChEBI" id="CHEBI:57783"/>
        <dbReference type="ChEBI" id="CHEBI:58349"/>
        <dbReference type="ChEBI" id="CHEBI:60777"/>
        <dbReference type="ChEBI" id="CHEBI:142685"/>
    </reaction>
</comment>
<comment type="catalytic activity">
    <reaction evidence="4">
        <text>(R)-mevalonate + NADP(+) = (R)-mevaldate + NADPH + H(+)</text>
        <dbReference type="Rhea" id="RHEA:20193"/>
        <dbReference type="ChEBI" id="CHEBI:15378"/>
        <dbReference type="ChEBI" id="CHEBI:36464"/>
        <dbReference type="ChEBI" id="CHEBI:57783"/>
        <dbReference type="ChEBI" id="CHEBI:58349"/>
        <dbReference type="ChEBI" id="CHEBI:195523"/>
    </reaction>
</comment>
<comment type="catalytic activity">
    <reaction evidence="4">
        <text>pyridine 3-methanol + NADP(+) = pyridine-3-carbaldehyde + NADPH + H(+)</text>
        <dbReference type="Rhea" id="RHEA:58776"/>
        <dbReference type="ChEBI" id="CHEBI:15378"/>
        <dbReference type="ChEBI" id="CHEBI:28345"/>
        <dbReference type="ChEBI" id="CHEBI:45213"/>
        <dbReference type="ChEBI" id="CHEBI:57783"/>
        <dbReference type="ChEBI" id="CHEBI:58349"/>
    </reaction>
</comment>
<comment type="catalytic activity">
    <reaction evidence="2">
        <text>S-nitroso-CoA + NADPH + H(+) = sulfinamide-CoA + NADP(+)</text>
        <dbReference type="Rhea" id="RHEA:78375"/>
        <dbReference type="ChEBI" id="CHEBI:15378"/>
        <dbReference type="ChEBI" id="CHEBI:57783"/>
        <dbReference type="ChEBI" id="CHEBI:58349"/>
        <dbReference type="ChEBI" id="CHEBI:145546"/>
        <dbReference type="ChEBI" id="CHEBI:145548"/>
    </reaction>
    <physiologicalReaction direction="left-to-right" evidence="2">
        <dbReference type="Rhea" id="RHEA:78376"/>
    </physiologicalReaction>
</comment>
<comment type="catalytic activity">
    <reaction evidence="5">
        <text>S-nitrosoglutathione + NADPH + H(+) = S-(hydroxysulfenamide)glutathione + NADP(+)</text>
        <dbReference type="Rhea" id="RHEA:63500"/>
        <dbReference type="ChEBI" id="CHEBI:15378"/>
        <dbReference type="ChEBI" id="CHEBI:57783"/>
        <dbReference type="ChEBI" id="CHEBI:58349"/>
        <dbReference type="ChEBI" id="CHEBI:145544"/>
        <dbReference type="ChEBI" id="CHEBI:229723"/>
    </reaction>
</comment>
<comment type="subcellular location">
    <subcellularLocation>
        <location evidence="5">Cytoplasm</location>
        <location evidence="5">Cytosol</location>
    </subcellularLocation>
    <subcellularLocation>
        <location evidence="5">Apical cell membrane</location>
    </subcellularLocation>
</comment>
<comment type="similarity">
    <text evidence="6">Belongs to the aldo/keto reductase family.</text>
</comment>
<organism>
    <name type="scientific">Pongo abelii</name>
    <name type="common">Sumatran orangutan</name>
    <name type="synonym">Pongo pygmaeus abelii</name>
    <dbReference type="NCBI Taxonomy" id="9601"/>
    <lineage>
        <taxon>Eukaryota</taxon>
        <taxon>Metazoa</taxon>
        <taxon>Chordata</taxon>
        <taxon>Craniata</taxon>
        <taxon>Vertebrata</taxon>
        <taxon>Euteleostomi</taxon>
        <taxon>Mammalia</taxon>
        <taxon>Eutheria</taxon>
        <taxon>Euarchontoglires</taxon>
        <taxon>Primates</taxon>
        <taxon>Haplorrhini</taxon>
        <taxon>Catarrhini</taxon>
        <taxon>Hominidae</taxon>
        <taxon>Pongo</taxon>
    </lineage>
</organism>
<sequence length="325" mass="36390">MAASCVLLHTGQKMPLIGLGTWKSEPGQVKAAVKYALSVGYRHIDCAAIYGNEPEIGEALKEDVGPGKAVPREELFVTSKLWNTKHHPEDVEPALQKTLADLQLEYLDLYLMHWPYAFERGDNPFPKNADGTICYDSTHYKETWKALEALVAKGLVRALGLSNFNSRQIDDILSVASVRPAVLQVECHPYLAQNELIAHCQARGLAVTAYSPLGSSDRAWRDPDEPVLLEEPVVLALAEKYGGSPAQILLRWQVQRKVICIPKSITPSRILQNIKVFDFTFSPEEMKQLNALNKNWRHIVPMLTVDGKRVPRDAGHPLYPFNDPY</sequence>
<reference key="1">
    <citation type="submission" date="2004-11" db="EMBL/GenBank/DDBJ databases">
        <authorList>
            <consortium name="The German cDNA consortium"/>
        </authorList>
    </citation>
    <scope>NUCLEOTIDE SEQUENCE [LARGE SCALE MRNA]</scope>
    <source>
        <tissue>Kidney</tissue>
    </source>
</reference>
<protein>
    <recommendedName>
        <fullName>Aldo-keto reductase family 1 member A1</fullName>
        <ecNumber evidence="4">1.1.1.2</ecNumber>
        <ecNumber evidence="4">1.1.1.372</ecNumber>
        <ecNumber evidence="4">1.1.1.54</ecNumber>
    </recommendedName>
    <alternativeName>
        <fullName>Alcohol dehydrogenase [NADP(+)]</fullName>
    </alternativeName>
    <alternativeName>
        <fullName>Aldehyde reductase</fullName>
    </alternativeName>
    <alternativeName>
        <fullName evidence="4">Glucuronate reductase</fullName>
        <ecNumber evidence="4">1.1.1.19</ecNumber>
    </alternativeName>
    <alternativeName>
        <fullName>Glucuronolactone reductase</fullName>
        <ecNumber evidence="4">1.1.1.20</ecNumber>
    </alternativeName>
    <alternativeName>
        <fullName evidence="6">S-nitroso-CoA reductase</fullName>
        <shortName evidence="6">ScorR</shortName>
        <ecNumber evidence="2">1.6.-.-</ecNumber>
    </alternativeName>
</protein>
<evidence type="ECO:0000250" key="1">
    <source>
        <dbReference type="UniProtKB" id="O60218"/>
    </source>
</evidence>
<evidence type="ECO:0000250" key="2">
    <source>
        <dbReference type="UniProtKB" id="P14550"/>
    </source>
</evidence>
<evidence type="ECO:0000250" key="3">
    <source>
        <dbReference type="UniProtKB" id="P50578"/>
    </source>
</evidence>
<evidence type="ECO:0000250" key="4">
    <source>
        <dbReference type="UniProtKB" id="P51635"/>
    </source>
</evidence>
<evidence type="ECO:0000250" key="5">
    <source>
        <dbReference type="UniProtKB" id="Q9JII6"/>
    </source>
</evidence>
<evidence type="ECO:0000305" key="6"/>
<name>AK1A1_PONAB</name>